<sequence length="146" mass="16942">MGRVRTKTVKKSAKVIIERYYPKLTLDFETNKRICDEIAIIASKRLRNKIAGYTTHLMKRIQRGPVRGISFKLQEEERERKDQYVPEVSALDFTQNSESGQLDVDTETKDLLKHLGFDSIPVNVIPVTQAQPVERGRRFGDRPRRD</sequence>
<feature type="chain" id="PRO_0000141543" description="Small ribosomal subunit protein eS17">
    <location>
        <begin position="1"/>
        <end position="146"/>
    </location>
</feature>
<keyword id="KW-0002">3D-structure</keyword>
<keyword id="KW-0963">Cytoplasm</keyword>
<keyword id="KW-1185">Reference proteome</keyword>
<keyword id="KW-0687">Ribonucleoprotein</keyword>
<keyword id="KW-0689">Ribosomal protein</keyword>
<accession>P27770</accession>
<accession>Q7RVE9</accession>
<reference key="1">
    <citation type="journal article" date="1991" name="Nucleic Acids Res.">
        <title>Coordinate expression of ribosomal protein genes in Neurospora crassa and identification of conserved upstream sequences.</title>
        <authorList>
            <person name="Shi Y."/>
            <person name="Tyler B.M."/>
        </authorList>
    </citation>
    <scope>NUCLEOTIDE SEQUENCE [GENOMIC DNA]</scope>
</reference>
<reference key="2">
    <citation type="journal article" date="2003" name="Nature">
        <title>The genome sequence of the filamentous fungus Neurospora crassa.</title>
        <authorList>
            <person name="Galagan J.E."/>
            <person name="Calvo S.E."/>
            <person name="Borkovich K.A."/>
            <person name="Selker E.U."/>
            <person name="Read N.D."/>
            <person name="Jaffe D.B."/>
            <person name="FitzHugh W."/>
            <person name="Ma L.-J."/>
            <person name="Smirnov S."/>
            <person name="Purcell S."/>
            <person name="Rehman B."/>
            <person name="Elkins T."/>
            <person name="Engels R."/>
            <person name="Wang S."/>
            <person name="Nielsen C.B."/>
            <person name="Butler J."/>
            <person name="Endrizzi M."/>
            <person name="Qui D."/>
            <person name="Ianakiev P."/>
            <person name="Bell-Pedersen D."/>
            <person name="Nelson M.A."/>
            <person name="Werner-Washburne M."/>
            <person name="Selitrennikoff C.P."/>
            <person name="Kinsey J.A."/>
            <person name="Braun E.L."/>
            <person name="Zelter A."/>
            <person name="Schulte U."/>
            <person name="Kothe G.O."/>
            <person name="Jedd G."/>
            <person name="Mewes H.-W."/>
            <person name="Staben C."/>
            <person name="Marcotte E."/>
            <person name="Greenberg D."/>
            <person name="Roy A."/>
            <person name="Foley K."/>
            <person name="Naylor J."/>
            <person name="Stange-Thomann N."/>
            <person name="Barrett R."/>
            <person name="Gnerre S."/>
            <person name="Kamal M."/>
            <person name="Kamvysselis M."/>
            <person name="Mauceli E.W."/>
            <person name="Bielke C."/>
            <person name="Rudd S."/>
            <person name="Frishman D."/>
            <person name="Krystofova S."/>
            <person name="Rasmussen C."/>
            <person name="Metzenberg R.L."/>
            <person name="Perkins D.D."/>
            <person name="Kroken S."/>
            <person name="Cogoni C."/>
            <person name="Macino G."/>
            <person name="Catcheside D.E.A."/>
            <person name="Li W."/>
            <person name="Pratt R.J."/>
            <person name="Osmani S.A."/>
            <person name="DeSouza C.P.C."/>
            <person name="Glass N.L."/>
            <person name="Orbach M.J."/>
            <person name="Berglund J.A."/>
            <person name="Voelker R."/>
            <person name="Yarden O."/>
            <person name="Plamann M."/>
            <person name="Seiler S."/>
            <person name="Dunlap J.C."/>
            <person name="Radford A."/>
            <person name="Aramayo R."/>
            <person name="Natvig D.O."/>
            <person name="Alex L.A."/>
            <person name="Mannhaupt G."/>
            <person name="Ebbole D.J."/>
            <person name="Freitag M."/>
            <person name="Paulsen I."/>
            <person name="Sachs M.S."/>
            <person name="Lander E.S."/>
            <person name="Nusbaum C."/>
            <person name="Birren B.W."/>
        </authorList>
    </citation>
    <scope>NUCLEOTIDE SEQUENCE [LARGE SCALE GENOMIC DNA]</scope>
    <source>
        <strain>ATCC 24698 / 74-OR23-1A / CBS 708.71 / DSM 1257 / FGSC 987</strain>
    </source>
</reference>
<reference key="3">
    <citation type="journal article" date="2021" name="Proc. Natl. Acad. Sci. U.S.A.">
        <title>Structure of the translating Neurospora ribosome arrested by cycloheximide.</title>
        <authorList>
            <person name="Shen L."/>
            <person name="Su Z."/>
            <person name="Yang K."/>
            <person name="Wu C."/>
            <person name="Becker T."/>
            <person name="Bell-Pedersen D."/>
            <person name="Zhang J."/>
            <person name="Sachs M.S."/>
        </authorList>
    </citation>
    <scope>STRUCTURE BY ELECTRON MICROSCOPY (2.70 ANGSTROMS)</scope>
</reference>
<name>RS17_NEUCR</name>
<proteinExistence type="evidence at protein level"/>
<dbReference type="EMBL" id="M63879">
    <property type="protein sequence ID" value="AAA33579.1"/>
    <property type="molecule type" value="Genomic_DNA"/>
</dbReference>
<dbReference type="EMBL" id="CM002239">
    <property type="protein sequence ID" value="EAA32599.1"/>
    <property type="molecule type" value="Genomic_DNA"/>
</dbReference>
<dbReference type="PIR" id="S34441">
    <property type="entry name" value="S34441"/>
</dbReference>
<dbReference type="RefSeq" id="XP_961835.1">
    <property type="nucleotide sequence ID" value="XM_956742.3"/>
</dbReference>
<dbReference type="PDB" id="7R81">
    <property type="method" value="EM"/>
    <property type="resolution" value="2.70 A"/>
    <property type="chains" value="S2=1-146"/>
</dbReference>
<dbReference type="PDBsum" id="7R81"/>
<dbReference type="EMDB" id="EMD-24307"/>
<dbReference type="SMR" id="P27770"/>
<dbReference type="FunCoup" id="P27770">
    <property type="interactions" value="1004"/>
</dbReference>
<dbReference type="STRING" id="367110.P27770"/>
<dbReference type="PaxDb" id="5141-EFNCRP00000007052"/>
<dbReference type="EnsemblFungi" id="EAA32599">
    <property type="protein sequence ID" value="EAA32599"/>
    <property type="gene ID" value="NCU07014"/>
</dbReference>
<dbReference type="GeneID" id="3877983"/>
<dbReference type="KEGG" id="ncr:NCU07014"/>
<dbReference type="VEuPathDB" id="FungiDB:NCU07014"/>
<dbReference type="HOGENOM" id="CLU_112958_0_1_1"/>
<dbReference type="InParanoid" id="P27770"/>
<dbReference type="OMA" id="MKRIQQG"/>
<dbReference type="OrthoDB" id="1727351at2759"/>
<dbReference type="Proteomes" id="UP000001805">
    <property type="component" value="Chromosome 4, Linkage Group IV"/>
</dbReference>
<dbReference type="GO" id="GO:0005829">
    <property type="term" value="C:cytosol"/>
    <property type="evidence" value="ECO:0007669"/>
    <property type="project" value="UniProtKB-ARBA"/>
</dbReference>
<dbReference type="GO" id="GO:1990904">
    <property type="term" value="C:ribonucleoprotein complex"/>
    <property type="evidence" value="ECO:0007669"/>
    <property type="project" value="UniProtKB-KW"/>
</dbReference>
<dbReference type="GO" id="GO:0005840">
    <property type="term" value="C:ribosome"/>
    <property type="evidence" value="ECO:0007669"/>
    <property type="project" value="UniProtKB-KW"/>
</dbReference>
<dbReference type="GO" id="GO:0003735">
    <property type="term" value="F:structural constituent of ribosome"/>
    <property type="evidence" value="ECO:0007669"/>
    <property type="project" value="InterPro"/>
</dbReference>
<dbReference type="GO" id="GO:0006412">
    <property type="term" value="P:translation"/>
    <property type="evidence" value="ECO:0007669"/>
    <property type="project" value="InterPro"/>
</dbReference>
<dbReference type="FunFam" id="1.10.60.20:FF:000001">
    <property type="entry name" value="40S ribosomal protein S17"/>
    <property type="match status" value="1"/>
</dbReference>
<dbReference type="Gene3D" id="1.10.60.20">
    <property type="entry name" value="Ribosomal protein S17e-like"/>
    <property type="match status" value="1"/>
</dbReference>
<dbReference type="HAMAP" id="MF_00511">
    <property type="entry name" value="Ribosomal_eS17"/>
    <property type="match status" value="1"/>
</dbReference>
<dbReference type="InterPro" id="IPR001210">
    <property type="entry name" value="Ribosomal_eS17"/>
</dbReference>
<dbReference type="InterPro" id="IPR018273">
    <property type="entry name" value="Ribosomal_eS17_CS"/>
</dbReference>
<dbReference type="InterPro" id="IPR036401">
    <property type="entry name" value="Ribosomal_eS17_sf"/>
</dbReference>
<dbReference type="NCBIfam" id="NF002242">
    <property type="entry name" value="PRK01151.1"/>
    <property type="match status" value="1"/>
</dbReference>
<dbReference type="PANTHER" id="PTHR10732">
    <property type="entry name" value="40S RIBOSOMAL PROTEIN S17"/>
    <property type="match status" value="1"/>
</dbReference>
<dbReference type="PANTHER" id="PTHR10732:SF0">
    <property type="entry name" value="40S RIBOSOMAL PROTEIN S17"/>
    <property type="match status" value="1"/>
</dbReference>
<dbReference type="Pfam" id="PF00833">
    <property type="entry name" value="Ribosomal_S17e"/>
    <property type="match status" value="1"/>
</dbReference>
<dbReference type="SUPFAM" id="SSF116820">
    <property type="entry name" value="Rps17e-like"/>
    <property type="match status" value="1"/>
</dbReference>
<dbReference type="PROSITE" id="PS00712">
    <property type="entry name" value="RIBOSOMAL_S17E"/>
    <property type="match status" value="1"/>
</dbReference>
<organism>
    <name type="scientific">Neurospora crassa (strain ATCC 24698 / 74-OR23-1A / CBS 708.71 / DSM 1257 / FGSC 987)</name>
    <dbReference type="NCBI Taxonomy" id="367110"/>
    <lineage>
        <taxon>Eukaryota</taxon>
        <taxon>Fungi</taxon>
        <taxon>Dikarya</taxon>
        <taxon>Ascomycota</taxon>
        <taxon>Pezizomycotina</taxon>
        <taxon>Sordariomycetes</taxon>
        <taxon>Sordariomycetidae</taxon>
        <taxon>Sordariales</taxon>
        <taxon>Sordariaceae</taxon>
        <taxon>Neurospora</taxon>
    </lineage>
</organism>
<evidence type="ECO:0000269" key="1">
    <source>
    </source>
</evidence>
<evidence type="ECO:0000303" key="2">
    <source>
    </source>
</evidence>
<evidence type="ECO:0000305" key="3"/>
<evidence type="ECO:0000305" key="4">
    <source>
    </source>
</evidence>
<comment type="function">
    <text evidence="4">Component of the ribosome, a large ribonucleoprotein complex responsible for the synthesis of proteins in the cell. The small ribosomal subunit (SSU) binds messenger RNAs (mRNAs) and translates the encoded message by selecting cognate aminoacyl-transfer RNA (tRNA) molecules. The large subunit (LSU) contains the ribosomal catalytic site termed the peptidyl transferase center (PTC), which catalyzes the formation of peptide bonds, thereby polymerizing the amino acids delivered by tRNAs into a polypeptide chain. The nascent polypeptides leave the ribosome through a tunnel in the LSU and interact with protein factors that function in enzymatic processing, targeting, and the membrane insertion of nascent chains at the exit of the ribosomal tunnel.</text>
</comment>
<comment type="subunit">
    <text evidence="1">Component of the small ribosomal subunit (SSU). Mature N.crassa ribosomes consist of a small (40S) and a large (60S) subunit. The 40S small subunit contains 1 molecule of ribosomal RNA (18S rRNA) and at least 32 different proteins. The large 60S subunit contains 3 rRNA molecules (26S, 5.8S and 5S rRNA) and at least 42 different proteins.</text>
</comment>
<comment type="subcellular location">
    <subcellularLocation>
        <location evidence="1">Cytoplasm</location>
    </subcellularLocation>
</comment>
<comment type="similarity">
    <text evidence="3">Belongs to the eukaryotic ribosomal protein eS17 family.</text>
</comment>
<gene>
    <name type="primary">rps-17</name>
    <name type="synonym">crp-3</name>
    <name type="ORF">NCU07014</name>
</gene>
<protein>
    <recommendedName>
        <fullName evidence="2">Small ribosomal subunit protein eS17</fullName>
    </recommendedName>
    <alternativeName>
        <fullName>40S ribosomal protein S17</fullName>
    </alternativeName>
    <alternativeName>
        <fullName>CRP3</fullName>
    </alternativeName>
</protein>